<gene>
    <name evidence="1" type="primary">recA</name>
    <name type="ordered locus">CPE1673</name>
</gene>
<reference key="1">
    <citation type="journal article" date="1997" name="Microbiology">
        <title>The recA gene from Clostridium perfringens is induced by methyl methanesulphonate and contains an upstream Cheo box.</title>
        <authorList>
            <person name="Johnston J.L."/>
            <person name="Sloan J."/>
            <person name="Fyfe J.A.M."/>
            <person name="Davies J.K."/>
            <person name="Rood J.I."/>
        </authorList>
    </citation>
    <scope>NUCLEOTIDE SEQUENCE [GENOMIC DNA]</scope>
    <source>
        <strain>13 / Type A</strain>
    </source>
</reference>
<reference key="2">
    <citation type="journal article" date="2002" name="Proc. Natl. Acad. Sci. U.S.A.">
        <title>Complete genome sequence of Clostridium perfringens, an anaerobic flesh-eater.</title>
        <authorList>
            <person name="Shimizu T."/>
            <person name="Ohtani K."/>
            <person name="Hirakawa H."/>
            <person name="Ohshima K."/>
            <person name="Yamashita A."/>
            <person name="Shiba T."/>
            <person name="Ogasawara N."/>
            <person name="Hattori M."/>
            <person name="Kuhara S."/>
            <person name="Hayashi H."/>
        </authorList>
    </citation>
    <scope>NUCLEOTIDE SEQUENCE [LARGE SCALE GENOMIC DNA]</scope>
    <source>
        <strain>13 / Type A</strain>
    </source>
</reference>
<sequence length="352" mass="37955">MANIDKDKLKAIEMAMGQIEKQFGKGSVMKLGEQGAPQMDAVSTGCLDLDIALGIGGVPKGRIIEIYGPESSGKTTVALHVVAEAQKLGGAAAYIDAEHALDPVYAKRLGVNIDDLVVSQPDTGEQALEITEALVRSGAIDVLVVDSVAALVPRAEIEGEMGDSHVGLQARLMSQALRKLTGTINKSNCVVIFINQLREKVGIMFGNPETTPGGRALKFYASVRMDIRRIDSIKQGDGITGNRTRVKIVKNKVAPPFKQAEFDIMYNEGISKEGNIVDVGVKENIVQKSGAWFSYGDIRLGQGRENAKQYLKENPAVALDIENQIREKYSLPLAKAVESTSVEENTEESVES</sequence>
<evidence type="ECO:0000255" key="1">
    <source>
        <dbReference type="HAMAP-Rule" id="MF_00268"/>
    </source>
</evidence>
<dbReference type="EMBL" id="U61497">
    <property type="protein sequence ID" value="AAC45139.1"/>
    <property type="molecule type" value="Genomic_DNA"/>
</dbReference>
<dbReference type="EMBL" id="BA000016">
    <property type="protein sequence ID" value="BAB81379.1"/>
    <property type="molecule type" value="Genomic_DNA"/>
</dbReference>
<dbReference type="RefSeq" id="WP_003459804.1">
    <property type="nucleotide sequence ID" value="NC_003366.1"/>
</dbReference>
<dbReference type="SMR" id="P94666"/>
<dbReference type="STRING" id="195102.gene:10490937"/>
<dbReference type="GeneID" id="93001789"/>
<dbReference type="KEGG" id="cpe:CPE1673"/>
<dbReference type="HOGENOM" id="CLU_040469_3_2_9"/>
<dbReference type="Proteomes" id="UP000000818">
    <property type="component" value="Chromosome"/>
</dbReference>
<dbReference type="GO" id="GO:0005829">
    <property type="term" value="C:cytosol"/>
    <property type="evidence" value="ECO:0007669"/>
    <property type="project" value="TreeGrafter"/>
</dbReference>
<dbReference type="GO" id="GO:0005524">
    <property type="term" value="F:ATP binding"/>
    <property type="evidence" value="ECO:0007669"/>
    <property type="project" value="UniProtKB-UniRule"/>
</dbReference>
<dbReference type="GO" id="GO:0016887">
    <property type="term" value="F:ATP hydrolysis activity"/>
    <property type="evidence" value="ECO:0007669"/>
    <property type="project" value="InterPro"/>
</dbReference>
<dbReference type="GO" id="GO:0140664">
    <property type="term" value="F:ATP-dependent DNA damage sensor activity"/>
    <property type="evidence" value="ECO:0007669"/>
    <property type="project" value="InterPro"/>
</dbReference>
<dbReference type="GO" id="GO:0003684">
    <property type="term" value="F:damaged DNA binding"/>
    <property type="evidence" value="ECO:0007669"/>
    <property type="project" value="UniProtKB-UniRule"/>
</dbReference>
<dbReference type="GO" id="GO:0003697">
    <property type="term" value="F:single-stranded DNA binding"/>
    <property type="evidence" value="ECO:0007669"/>
    <property type="project" value="UniProtKB-UniRule"/>
</dbReference>
<dbReference type="GO" id="GO:0006310">
    <property type="term" value="P:DNA recombination"/>
    <property type="evidence" value="ECO:0007669"/>
    <property type="project" value="UniProtKB-UniRule"/>
</dbReference>
<dbReference type="GO" id="GO:0006281">
    <property type="term" value="P:DNA repair"/>
    <property type="evidence" value="ECO:0007669"/>
    <property type="project" value="UniProtKB-UniRule"/>
</dbReference>
<dbReference type="GO" id="GO:0009432">
    <property type="term" value="P:SOS response"/>
    <property type="evidence" value="ECO:0007669"/>
    <property type="project" value="UniProtKB-UniRule"/>
</dbReference>
<dbReference type="CDD" id="cd00983">
    <property type="entry name" value="RecA"/>
    <property type="match status" value="1"/>
</dbReference>
<dbReference type="FunFam" id="3.40.50.300:FF:000087">
    <property type="entry name" value="Recombinase RecA"/>
    <property type="match status" value="1"/>
</dbReference>
<dbReference type="Gene3D" id="3.40.50.300">
    <property type="entry name" value="P-loop containing nucleotide triphosphate hydrolases"/>
    <property type="match status" value="1"/>
</dbReference>
<dbReference type="HAMAP" id="MF_00268">
    <property type="entry name" value="RecA"/>
    <property type="match status" value="1"/>
</dbReference>
<dbReference type="InterPro" id="IPR003593">
    <property type="entry name" value="AAA+_ATPase"/>
</dbReference>
<dbReference type="InterPro" id="IPR013765">
    <property type="entry name" value="DNA_recomb/repair_RecA"/>
</dbReference>
<dbReference type="InterPro" id="IPR020584">
    <property type="entry name" value="DNA_recomb/repair_RecA_CS"/>
</dbReference>
<dbReference type="InterPro" id="IPR027417">
    <property type="entry name" value="P-loop_NTPase"/>
</dbReference>
<dbReference type="InterPro" id="IPR049261">
    <property type="entry name" value="RecA-like_C"/>
</dbReference>
<dbReference type="InterPro" id="IPR049428">
    <property type="entry name" value="RecA-like_N"/>
</dbReference>
<dbReference type="InterPro" id="IPR020588">
    <property type="entry name" value="RecA_ATP-bd"/>
</dbReference>
<dbReference type="InterPro" id="IPR023400">
    <property type="entry name" value="RecA_C_sf"/>
</dbReference>
<dbReference type="InterPro" id="IPR020587">
    <property type="entry name" value="RecA_monomer-monomer_interface"/>
</dbReference>
<dbReference type="NCBIfam" id="TIGR02012">
    <property type="entry name" value="tigrfam_recA"/>
    <property type="match status" value="1"/>
</dbReference>
<dbReference type="PANTHER" id="PTHR45900:SF1">
    <property type="entry name" value="MITOCHONDRIAL DNA REPAIR PROTEIN RECA HOMOLOG-RELATED"/>
    <property type="match status" value="1"/>
</dbReference>
<dbReference type="PANTHER" id="PTHR45900">
    <property type="entry name" value="RECA"/>
    <property type="match status" value="1"/>
</dbReference>
<dbReference type="Pfam" id="PF00154">
    <property type="entry name" value="RecA"/>
    <property type="match status" value="1"/>
</dbReference>
<dbReference type="Pfam" id="PF21096">
    <property type="entry name" value="RecA_C"/>
    <property type="match status" value="1"/>
</dbReference>
<dbReference type="PRINTS" id="PR00142">
    <property type="entry name" value="RECA"/>
</dbReference>
<dbReference type="SMART" id="SM00382">
    <property type="entry name" value="AAA"/>
    <property type="match status" value="1"/>
</dbReference>
<dbReference type="SUPFAM" id="SSF52540">
    <property type="entry name" value="P-loop containing nucleoside triphosphate hydrolases"/>
    <property type="match status" value="1"/>
</dbReference>
<dbReference type="SUPFAM" id="SSF54752">
    <property type="entry name" value="RecA protein, C-terminal domain"/>
    <property type="match status" value="1"/>
</dbReference>
<dbReference type="PROSITE" id="PS00321">
    <property type="entry name" value="RECA_1"/>
    <property type="match status" value="1"/>
</dbReference>
<dbReference type="PROSITE" id="PS50162">
    <property type="entry name" value="RECA_2"/>
    <property type="match status" value="1"/>
</dbReference>
<dbReference type="PROSITE" id="PS50163">
    <property type="entry name" value="RECA_3"/>
    <property type="match status" value="1"/>
</dbReference>
<organism>
    <name type="scientific">Clostridium perfringens (strain 13 / Type A)</name>
    <dbReference type="NCBI Taxonomy" id="195102"/>
    <lineage>
        <taxon>Bacteria</taxon>
        <taxon>Bacillati</taxon>
        <taxon>Bacillota</taxon>
        <taxon>Clostridia</taxon>
        <taxon>Eubacteriales</taxon>
        <taxon>Clostridiaceae</taxon>
        <taxon>Clostridium</taxon>
    </lineage>
</organism>
<name>RECA_CLOPE</name>
<feature type="chain" id="PRO_0000122692" description="Protein RecA">
    <location>
        <begin position="1"/>
        <end position="352"/>
    </location>
</feature>
<feature type="binding site" evidence="1">
    <location>
        <begin position="68"/>
        <end position="75"/>
    </location>
    <ligand>
        <name>ATP</name>
        <dbReference type="ChEBI" id="CHEBI:30616"/>
    </ligand>
</feature>
<keyword id="KW-0067">ATP-binding</keyword>
<keyword id="KW-0963">Cytoplasm</keyword>
<keyword id="KW-0227">DNA damage</keyword>
<keyword id="KW-0233">DNA recombination</keyword>
<keyword id="KW-0234">DNA repair</keyword>
<keyword id="KW-0238">DNA-binding</keyword>
<keyword id="KW-0547">Nucleotide-binding</keyword>
<keyword id="KW-1185">Reference proteome</keyword>
<keyword id="KW-0742">SOS response</keyword>
<comment type="function">
    <text>Can catalyze the hydrolysis of ATP in the presence of single-stranded DNA, the ATP-dependent uptake of single-stranded DNA by duplex DNA, and the ATP-dependent hybridization of homologous single-stranded DNAs. It interacts with LexA causing its activation and leading to its autocatalytic cleavage.</text>
</comment>
<comment type="subcellular location">
    <subcellularLocation>
        <location evidence="1">Cytoplasm</location>
    </subcellularLocation>
</comment>
<comment type="similarity">
    <text evidence="1">Belongs to the RecA family.</text>
</comment>
<protein>
    <recommendedName>
        <fullName evidence="1">Protein RecA</fullName>
    </recommendedName>
    <alternativeName>
        <fullName evidence="1">Recombinase A</fullName>
    </alternativeName>
</protein>
<proteinExistence type="inferred from homology"/>
<accession>P94666</accession>